<feature type="chain" id="PRO_0000144535" description="ATP synthase subunit beta, chloroplastic">
    <location>
        <begin position="1"/>
        <end position="498"/>
    </location>
</feature>
<feature type="binding site" evidence="1">
    <location>
        <begin position="172"/>
        <end position="179"/>
    </location>
    <ligand>
        <name>ATP</name>
        <dbReference type="ChEBI" id="CHEBI:30616"/>
    </ligand>
</feature>
<accession>Q9MTP7</accession>
<gene>
    <name evidence="1" type="primary">atpB</name>
</gene>
<comment type="function">
    <text evidence="1">Produces ATP from ADP in the presence of a proton gradient across the membrane. The catalytic sites are hosted primarily by the beta subunits.</text>
</comment>
<comment type="catalytic activity">
    <reaction evidence="1">
        <text>ATP + H2O + 4 H(+)(in) = ADP + phosphate + 5 H(+)(out)</text>
        <dbReference type="Rhea" id="RHEA:57720"/>
        <dbReference type="ChEBI" id="CHEBI:15377"/>
        <dbReference type="ChEBI" id="CHEBI:15378"/>
        <dbReference type="ChEBI" id="CHEBI:30616"/>
        <dbReference type="ChEBI" id="CHEBI:43474"/>
        <dbReference type="ChEBI" id="CHEBI:456216"/>
        <dbReference type="EC" id="7.1.2.2"/>
    </reaction>
</comment>
<comment type="subunit">
    <text evidence="1">F-type ATPases have 2 components, CF(1) - the catalytic core - and CF(0) - the membrane proton channel. CF(1) has five subunits: alpha(3), beta(3), gamma(1), delta(1), epsilon(1). CF(0) has four main subunits: a(1), b(1), b'(1) and c(9-12).</text>
</comment>
<comment type="subcellular location">
    <subcellularLocation>
        <location evidence="1">Plastid</location>
        <location evidence="1">Chloroplast thylakoid membrane</location>
        <topology evidence="1">Peripheral membrane protein</topology>
    </subcellularLocation>
</comment>
<comment type="similarity">
    <text evidence="1">Belongs to the ATPase alpha/beta chains family.</text>
</comment>
<protein>
    <recommendedName>
        <fullName evidence="1">ATP synthase subunit beta, chloroplastic</fullName>
        <ecNumber evidence="1">7.1.2.2</ecNumber>
    </recommendedName>
    <alternativeName>
        <fullName evidence="1">ATP synthase F1 sector subunit beta</fullName>
    </alternativeName>
    <alternativeName>
        <fullName evidence="1">F-ATPase subunit beta</fullName>
    </alternativeName>
</protein>
<dbReference type="EC" id="7.1.2.2" evidence="1"/>
<dbReference type="EMBL" id="AJ271079">
    <property type="protein sequence ID" value="CAB67128.2"/>
    <property type="molecule type" value="Genomic_DNA"/>
</dbReference>
<dbReference type="RefSeq" id="NP_084663.2">
    <property type="nucleotide sequence ID" value="NC_002693.2"/>
</dbReference>
<dbReference type="SMR" id="Q9MTP7"/>
<dbReference type="GeneID" id="802790"/>
<dbReference type="GO" id="GO:0009535">
    <property type="term" value="C:chloroplast thylakoid membrane"/>
    <property type="evidence" value="ECO:0007669"/>
    <property type="project" value="UniProtKB-SubCell"/>
</dbReference>
<dbReference type="GO" id="GO:0005739">
    <property type="term" value="C:mitochondrion"/>
    <property type="evidence" value="ECO:0007669"/>
    <property type="project" value="GOC"/>
</dbReference>
<dbReference type="GO" id="GO:0045259">
    <property type="term" value="C:proton-transporting ATP synthase complex"/>
    <property type="evidence" value="ECO:0007669"/>
    <property type="project" value="UniProtKB-KW"/>
</dbReference>
<dbReference type="GO" id="GO:0005524">
    <property type="term" value="F:ATP binding"/>
    <property type="evidence" value="ECO:0007669"/>
    <property type="project" value="UniProtKB-UniRule"/>
</dbReference>
<dbReference type="GO" id="GO:0016887">
    <property type="term" value="F:ATP hydrolysis activity"/>
    <property type="evidence" value="ECO:0007669"/>
    <property type="project" value="InterPro"/>
</dbReference>
<dbReference type="GO" id="GO:0046933">
    <property type="term" value="F:proton-transporting ATP synthase activity, rotational mechanism"/>
    <property type="evidence" value="ECO:0007669"/>
    <property type="project" value="UniProtKB-UniRule"/>
</dbReference>
<dbReference type="GO" id="GO:0042776">
    <property type="term" value="P:proton motive force-driven mitochondrial ATP synthesis"/>
    <property type="evidence" value="ECO:0007669"/>
    <property type="project" value="TreeGrafter"/>
</dbReference>
<dbReference type="CDD" id="cd18110">
    <property type="entry name" value="ATP-synt_F1_beta_C"/>
    <property type="match status" value="1"/>
</dbReference>
<dbReference type="CDD" id="cd18115">
    <property type="entry name" value="ATP-synt_F1_beta_N"/>
    <property type="match status" value="1"/>
</dbReference>
<dbReference type="CDD" id="cd01133">
    <property type="entry name" value="F1-ATPase_beta_CD"/>
    <property type="match status" value="1"/>
</dbReference>
<dbReference type="FunFam" id="1.10.1140.10:FF:000001">
    <property type="entry name" value="ATP synthase subunit beta"/>
    <property type="match status" value="1"/>
</dbReference>
<dbReference type="FunFam" id="3.40.50.12240:FF:000006">
    <property type="entry name" value="ATP synthase subunit beta"/>
    <property type="match status" value="1"/>
</dbReference>
<dbReference type="FunFam" id="3.40.50.300:FF:000004">
    <property type="entry name" value="ATP synthase subunit beta"/>
    <property type="match status" value="1"/>
</dbReference>
<dbReference type="FunFam" id="2.40.10.170:FF:000002">
    <property type="entry name" value="ATP synthase subunit beta, chloroplastic"/>
    <property type="match status" value="1"/>
</dbReference>
<dbReference type="Gene3D" id="2.40.10.170">
    <property type="match status" value="1"/>
</dbReference>
<dbReference type="Gene3D" id="1.10.1140.10">
    <property type="entry name" value="Bovine Mitochondrial F1-atpase, Atp Synthase Beta Chain, Chain D, domain 3"/>
    <property type="match status" value="1"/>
</dbReference>
<dbReference type="Gene3D" id="3.40.50.300">
    <property type="entry name" value="P-loop containing nucleotide triphosphate hydrolases"/>
    <property type="match status" value="1"/>
</dbReference>
<dbReference type="HAMAP" id="MF_01347">
    <property type="entry name" value="ATP_synth_beta_bact"/>
    <property type="match status" value="1"/>
</dbReference>
<dbReference type="InterPro" id="IPR003593">
    <property type="entry name" value="AAA+_ATPase"/>
</dbReference>
<dbReference type="InterPro" id="IPR055190">
    <property type="entry name" value="ATP-synt_VA_C"/>
</dbReference>
<dbReference type="InterPro" id="IPR005722">
    <property type="entry name" value="ATP_synth_F1_bsu"/>
</dbReference>
<dbReference type="InterPro" id="IPR020003">
    <property type="entry name" value="ATPase_a/bsu_AS"/>
</dbReference>
<dbReference type="InterPro" id="IPR050053">
    <property type="entry name" value="ATPase_alpha/beta_chains"/>
</dbReference>
<dbReference type="InterPro" id="IPR004100">
    <property type="entry name" value="ATPase_F1/V1/A1_a/bsu_N"/>
</dbReference>
<dbReference type="InterPro" id="IPR036121">
    <property type="entry name" value="ATPase_F1/V1/A1_a/bsu_N_sf"/>
</dbReference>
<dbReference type="InterPro" id="IPR000194">
    <property type="entry name" value="ATPase_F1/V1/A1_a/bsu_nucl-bd"/>
</dbReference>
<dbReference type="InterPro" id="IPR024034">
    <property type="entry name" value="ATPase_F1/V1_b/a_C"/>
</dbReference>
<dbReference type="InterPro" id="IPR027417">
    <property type="entry name" value="P-loop_NTPase"/>
</dbReference>
<dbReference type="NCBIfam" id="TIGR01039">
    <property type="entry name" value="atpD"/>
    <property type="match status" value="1"/>
</dbReference>
<dbReference type="PANTHER" id="PTHR15184">
    <property type="entry name" value="ATP SYNTHASE"/>
    <property type="match status" value="1"/>
</dbReference>
<dbReference type="PANTHER" id="PTHR15184:SF71">
    <property type="entry name" value="ATP SYNTHASE SUBUNIT BETA, MITOCHONDRIAL"/>
    <property type="match status" value="1"/>
</dbReference>
<dbReference type="Pfam" id="PF00006">
    <property type="entry name" value="ATP-synt_ab"/>
    <property type="match status" value="1"/>
</dbReference>
<dbReference type="Pfam" id="PF02874">
    <property type="entry name" value="ATP-synt_ab_N"/>
    <property type="match status" value="1"/>
</dbReference>
<dbReference type="Pfam" id="PF22919">
    <property type="entry name" value="ATP-synt_VA_C"/>
    <property type="match status" value="1"/>
</dbReference>
<dbReference type="SMART" id="SM00382">
    <property type="entry name" value="AAA"/>
    <property type="match status" value="1"/>
</dbReference>
<dbReference type="SUPFAM" id="SSF47917">
    <property type="entry name" value="C-terminal domain of alpha and beta subunits of F1 ATP synthase"/>
    <property type="match status" value="1"/>
</dbReference>
<dbReference type="SUPFAM" id="SSF50615">
    <property type="entry name" value="N-terminal domain of alpha and beta subunits of F1 ATP synthase"/>
    <property type="match status" value="1"/>
</dbReference>
<dbReference type="SUPFAM" id="SSF52540">
    <property type="entry name" value="P-loop containing nucleoside triphosphate hydrolases"/>
    <property type="match status" value="1"/>
</dbReference>
<dbReference type="PROSITE" id="PS00152">
    <property type="entry name" value="ATPASE_ALPHA_BETA"/>
    <property type="match status" value="1"/>
</dbReference>
<sequence length="498" mass="53531">MRINPTTSGPGVSTLEKKKSGRIAQIIGPVLDVTFPPGKMPNIYNALVVKGRDTGGQEINVTCEVQQLLGNNRVRAVAMSATDGLTRGMEVIDTGAPLSVPVGGATLGRIFNVLGEPVDELGPVDTRTTSPIHRSAPAFIQLDTKLSIFETGIKVVDLLAPYRRGGKIGLFGGAGVGKTVLIMELINNIAKAHGGVSVFGGVGERTREGNDLYMEMKESGVINEQNIAESKVALVYGQMNEPPGARMRVGLTALTMAEYFRDVNKQNVLLFIDNIFRFVQAGSEVSALLGRMPSAVGYQPTLSTEMGSLQERITSTKAGSITSIQAVYVPADDLTDPAPATTFAHLDATTVLSRGLAAKGIYPAVDPLDSTSTMLQPRIVGDEHYETAQRVKETLQRYKELQDIISILGLDELSEEDRLTVARARKIERFLSQPFFVAEVFTGSPGKYVGLAETIRGFKLILSGELDGLPEQAFYLVGTIDEATAKAANLEMESDLKK</sequence>
<name>ATPB_OENEH</name>
<evidence type="ECO:0000255" key="1">
    <source>
        <dbReference type="HAMAP-Rule" id="MF_01347"/>
    </source>
</evidence>
<reference key="1">
    <citation type="journal article" date="2000" name="Mol. Gen. Genet.">
        <title>Complete nucleotide sequence of the Oenothera elata plastid chromosome, representing plastome I of the five distinguishable Euoenothera plastomes.</title>
        <authorList>
            <person name="Hupfer H."/>
            <person name="Swiatek M."/>
            <person name="Hornung S."/>
            <person name="Herrmann R.G."/>
            <person name="Maier R.M."/>
            <person name="Chiu W.-L."/>
            <person name="Sears B."/>
        </authorList>
    </citation>
    <scope>NUCLEOTIDE SEQUENCE [LARGE SCALE GENOMIC DNA]</scope>
    <source>
        <strain>cv. Johansen</strain>
    </source>
</reference>
<reference key="2">
    <citation type="journal article" date="2008" name="Nucleic Acids Res.">
        <title>The complete nucleotide sequences of the five genetically distinct plastid genomes of Oenothera, subsection Oenothera: I. Sequence evaluation and plastome evolution.</title>
        <authorList>
            <person name="Greiner S."/>
            <person name="Wang X."/>
            <person name="Rauwolf U."/>
            <person name="Silber M.V."/>
            <person name="Mayer K."/>
            <person name="Meurer J."/>
            <person name="Haberer G."/>
            <person name="Herrmann R.G."/>
        </authorList>
    </citation>
    <scope>SEQUENCE REVISION TO 104; 117; 137;144; 145; 162 AND 254-258</scope>
</reference>
<geneLocation type="chloroplast"/>
<keyword id="KW-0066">ATP synthesis</keyword>
<keyword id="KW-0067">ATP-binding</keyword>
<keyword id="KW-0139">CF(1)</keyword>
<keyword id="KW-0150">Chloroplast</keyword>
<keyword id="KW-0375">Hydrogen ion transport</keyword>
<keyword id="KW-0406">Ion transport</keyword>
<keyword id="KW-0472">Membrane</keyword>
<keyword id="KW-0547">Nucleotide-binding</keyword>
<keyword id="KW-0934">Plastid</keyword>
<keyword id="KW-0793">Thylakoid</keyword>
<keyword id="KW-1278">Translocase</keyword>
<keyword id="KW-0813">Transport</keyword>
<proteinExistence type="inferred from homology"/>
<organism>
    <name type="scientific">Oenothera elata subsp. hookeri</name>
    <name type="common">Hooker's evening primrose</name>
    <name type="synonym">Oenothera hookeri</name>
    <dbReference type="NCBI Taxonomy" id="85636"/>
    <lineage>
        <taxon>Eukaryota</taxon>
        <taxon>Viridiplantae</taxon>
        <taxon>Streptophyta</taxon>
        <taxon>Embryophyta</taxon>
        <taxon>Tracheophyta</taxon>
        <taxon>Spermatophyta</taxon>
        <taxon>Magnoliopsida</taxon>
        <taxon>eudicotyledons</taxon>
        <taxon>Gunneridae</taxon>
        <taxon>Pentapetalae</taxon>
        <taxon>rosids</taxon>
        <taxon>malvids</taxon>
        <taxon>Myrtales</taxon>
        <taxon>Onagraceae</taxon>
        <taxon>Onagroideae</taxon>
        <taxon>Onagreae</taxon>
        <taxon>Oenothera</taxon>
    </lineage>
</organism>